<gene>
    <name type="primary">Necap1</name>
</gene>
<comment type="function">
    <text evidence="1 4">Involved in endocytosis.</text>
</comment>
<comment type="subunit">
    <text evidence="4 5 6">Interacts with AP1G1 and AP2A1 components of the adapter protein complexes AP-1 and AP-2. Interacts with the GAE domain proteins GGA1, GGA2 and GGA3.</text>
</comment>
<comment type="interaction">
    <interactant intactId="EBI-7592476">
        <id>Q9CR95</id>
    </interactant>
    <interactant intactId="EBI-1391846">
        <id>P98078</id>
        <label>Dab2</label>
    </interactant>
    <organismsDiffer>false</organismsDiffer>
    <experiments>2</experiments>
</comment>
<comment type="interaction">
    <interactant intactId="EBI-7592476">
        <id>Q9CR95</id>
    </interactant>
    <interactant intactId="EBI-16078916">
        <id>Q8K285</id>
        <label>Fcho1</label>
    </interactant>
    <organismsDiffer>false</organismsDiffer>
    <experiments>2</experiments>
</comment>
<comment type="interaction">
    <interactant intactId="EBI-7592476">
        <id>Q9CR95</id>
    </interactant>
    <interactant intactId="EBI-80080">
        <id>O08838</id>
        <label>Amph</label>
    </interactant>
    <organismsDiffer>true</organismsDiffer>
    <experiments>8</experiments>
</comment>
<comment type="interaction">
    <interactant intactId="EBI-7592476">
        <id>Q9CR95</id>
    </interactant>
    <interactant intactId="EBI-7121510">
        <id>P49418</id>
        <label>AMPH</label>
    </interactant>
    <organismsDiffer>true</organismsDiffer>
    <experiments>6</experiments>
</comment>
<comment type="interaction">
    <interactant intactId="EBI-7592476">
        <id>Q9CR95</id>
    </interactant>
    <interactant intactId="EBI-432924">
        <id>P63010</id>
        <label>AP2B1</label>
    </interactant>
    <organismsDiffer>true</organismsDiffer>
    <experiments>2</experiments>
</comment>
<comment type="interaction">
    <interactant intactId="EBI-7592476">
        <id>Q9CR95</id>
    </interactant>
    <interactant intactId="EBI-80095">
        <id>O08839</id>
        <label>Bin1</label>
    </interactant>
    <organismsDiffer>true</organismsDiffer>
    <experiments>9</experiments>
</comment>
<comment type="interaction">
    <interactant intactId="EBI-7592476">
        <id>Q9CR95</id>
    </interactant>
    <interactant intactId="EBI-473886">
        <id>O00291</id>
        <label>HIP1</label>
    </interactant>
    <organismsDiffer>true</organismsDiffer>
    <experiments>3</experiments>
</comment>
<comment type="interaction">
    <interactant intactId="EBI-7592476">
        <id>Q9CR95</id>
    </interactant>
    <interactant intactId="EBI-1105187">
        <id>O60641</id>
        <label>SNAP91</label>
    </interactant>
    <organismsDiffer>true</organismsDiffer>
    <experiments>2</experiments>
</comment>
<comment type="subcellular location">
    <subcellularLocation>
        <location evidence="4">Cytoplasmic vesicle</location>
        <location evidence="4">Clathrin-coated vesicle membrane</location>
    </subcellularLocation>
    <subcellularLocation>
        <location evidence="4">Cell membrane</location>
    </subcellularLocation>
    <text>Colocalizes with AP-2 at the plasma membrane.</text>
</comment>
<comment type="tissue specificity">
    <text evidence="4">Expressed primarily in brain (at protein level).</text>
</comment>
<comment type="developmental stage">
    <text evidence="7">Expressed in the brain and spinal cord at 14.5 dpc (at protein level).</text>
</comment>
<comment type="domain">
    <text>The WXXF motifs mediate binding of accessory proteins to the ear-domain of AP-1, GGAs and AP-2 through hydrophobic interactions. Selective binding to the GAE domains of AP-1 or to the alpha-ear domain of AP-2 is tuned by the acidic context surrounding the motif and the properties of the second residue of the motif itself. The WXXF motif 1, which is preceded by an acidic residue and has a glycine in second position mediates specific interaction with AP-1. The WXXF motif 2, which is followed by the C-terminal carboxyl group negative charge, allows specific interaction with AP-2.</text>
</comment>
<comment type="similarity">
    <text evidence="8">Belongs to the NECAP family.</text>
</comment>
<protein>
    <recommendedName>
        <fullName>Adaptin ear-binding coat-associated protein 1</fullName>
    </recommendedName>
    <alternativeName>
        <fullName>NECAP endocytosis-associated protein 1</fullName>
        <shortName>NECAP-1</shortName>
    </alternativeName>
</protein>
<reference key="1">
    <citation type="journal article" date="2005" name="Science">
        <title>The transcriptional landscape of the mammalian genome.</title>
        <authorList>
            <person name="Carninci P."/>
            <person name="Kasukawa T."/>
            <person name="Katayama S."/>
            <person name="Gough J."/>
            <person name="Frith M.C."/>
            <person name="Maeda N."/>
            <person name="Oyama R."/>
            <person name="Ravasi T."/>
            <person name="Lenhard B."/>
            <person name="Wells C."/>
            <person name="Kodzius R."/>
            <person name="Shimokawa K."/>
            <person name="Bajic V.B."/>
            <person name="Brenner S.E."/>
            <person name="Batalov S."/>
            <person name="Forrest A.R."/>
            <person name="Zavolan M."/>
            <person name="Davis M.J."/>
            <person name="Wilming L.G."/>
            <person name="Aidinis V."/>
            <person name="Allen J.E."/>
            <person name="Ambesi-Impiombato A."/>
            <person name="Apweiler R."/>
            <person name="Aturaliya R.N."/>
            <person name="Bailey T.L."/>
            <person name="Bansal M."/>
            <person name="Baxter L."/>
            <person name="Beisel K.W."/>
            <person name="Bersano T."/>
            <person name="Bono H."/>
            <person name="Chalk A.M."/>
            <person name="Chiu K.P."/>
            <person name="Choudhary V."/>
            <person name="Christoffels A."/>
            <person name="Clutterbuck D.R."/>
            <person name="Crowe M.L."/>
            <person name="Dalla E."/>
            <person name="Dalrymple B.P."/>
            <person name="de Bono B."/>
            <person name="Della Gatta G."/>
            <person name="di Bernardo D."/>
            <person name="Down T."/>
            <person name="Engstrom P."/>
            <person name="Fagiolini M."/>
            <person name="Faulkner G."/>
            <person name="Fletcher C.F."/>
            <person name="Fukushima T."/>
            <person name="Furuno M."/>
            <person name="Futaki S."/>
            <person name="Gariboldi M."/>
            <person name="Georgii-Hemming P."/>
            <person name="Gingeras T.R."/>
            <person name="Gojobori T."/>
            <person name="Green R.E."/>
            <person name="Gustincich S."/>
            <person name="Harbers M."/>
            <person name="Hayashi Y."/>
            <person name="Hensch T.K."/>
            <person name="Hirokawa N."/>
            <person name="Hill D."/>
            <person name="Huminiecki L."/>
            <person name="Iacono M."/>
            <person name="Ikeo K."/>
            <person name="Iwama A."/>
            <person name="Ishikawa T."/>
            <person name="Jakt M."/>
            <person name="Kanapin A."/>
            <person name="Katoh M."/>
            <person name="Kawasawa Y."/>
            <person name="Kelso J."/>
            <person name="Kitamura H."/>
            <person name="Kitano H."/>
            <person name="Kollias G."/>
            <person name="Krishnan S.P."/>
            <person name="Kruger A."/>
            <person name="Kummerfeld S.K."/>
            <person name="Kurochkin I.V."/>
            <person name="Lareau L.F."/>
            <person name="Lazarevic D."/>
            <person name="Lipovich L."/>
            <person name="Liu J."/>
            <person name="Liuni S."/>
            <person name="McWilliam S."/>
            <person name="Madan Babu M."/>
            <person name="Madera M."/>
            <person name="Marchionni L."/>
            <person name="Matsuda H."/>
            <person name="Matsuzawa S."/>
            <person name="Miki H."/>
            <person name="Mignone F."/>
            <person name="Miyake S."/>
            <person name="Morris K."/>
            <person name="Mottagui-Tabar S."/>
            <person name="Mulder N."/>
            <person name="Nakano N."/>
            <person name="Nakauchi H."/>
            <person name="Ng P."/>
            <person name="Nilsson R."/>
            <person name="Nishiguchi S."/>
            <person name="Nishikawa S."/>
            <person name="Nori F."/>
            <person name="Ohara O."/>
            <person name="Okazaki Y."/>
            <person name="Orlando V."/>
            <person name="Pang K.C."/>
            <person name="Pavan W.J."/>
            <person name="Pavesi G."/>
            <person name="Pesole G."/>
            <person name="Petrovsky N."/>
            <person name="Piazza S."/>
            <person name="Reed J."/>
            <person name="Reid J.F."/>
            <person name="Ring B.Z."/>
            <person name="Ringwald M."/>
            <person name="Rost B."/>
            <person name="Ruan Y."/>
            <person name="Salzberg S.L."/>
            <person name="Sandelin A."/>
            <person name="Schneider C."/>
            <person name="Schoenbach C."/>
            <person name="Sekiguchi K."/>
            <person name="Semple C.A."/>
            <person name="Seno S."/>
            <person name="Sessa L."/>
            <person name="Sheng Y."/>
            <person name="Shibata Y."/>
            <person name="Shimada H."/>
            <person name="Shimada K."/>
            <person name="Silva D."/>
            <person name="Sinclair B."/>
            <person name="Sperling S."/>
            <person name="Stupka E."/>
            <person name="Sugiura K."/>
            <person name="Sultana R."/>
            <person name="Takenaka Y."/>
            <person name="Taki K."/>
            <person name="Tammoja K."/>
            <person name="Tan S.L."/>
            <person name="Tang S."/>
            <person name="Taylor M.S."/>
            <person name="Tegner J."/>
            <person name="Teichmann S.A."/>
            <person name="Ueda H.R."/>
            <person name="van Nimwegen E."/>
            <person name="Verardo R."/>
            <person name="Wei C.L."/>
            <person name="Yagi K."/>
            <person name="Yamanishi H."/>
            <person name="Zabarovsky E."/>
            <person name="Zhu S."/>
            <person name="Zimmer A."/>
            <person name="Hide W."/>
            <person name="Bult C."/>
            <person name="Grimmond S.M."/>
            <person name="Teasdale R.D."/>
            <person name="Liu E.T."/>
            <person name="Brusic V."/>
            <person name="Quackenbush J."/>
            <person name="Wahlestedt C."/>
            <person name="Mattick J.S."/>
            <person name="Hume D.A."/>
            <person name="Kai C."/>
            <person name="Sasaki D."/>
            <person name="Tomaru Y."/>
            <person name="Fukuda S."/>
            <person name="Kanamori-Katayama M."/>
            <person name="Suzuki M."/>
            <person name="Aoki J."/>
            <person name="Arakawa T."/>
            <person name="Iida J."/>
            <person name="Imamura K."/>
            <person name="Itoh M."/>
            <person name="Kato T."/>
            <person name="Kawaji H."/>
            <person name="Kawagashira N."/>
            <person name="Kawashima T."/>
            <person name="Kojima M."/>
            <person name="Kondo S."/>
            <person name="Konno H."/>
            <person name="Nakano K."/>
            <person name="Ninomiya N."/>
            <person name="Nishio T."/>
            <person name="Okada M."/>
            <person name="Plessy C."/>
            <person name="Shibata K."/>
            <person name="Shiraki T."/>
            <person name="Suzuki S."/>
            <person name="Tagami M."/>
            <person name="Waki K."/>
            <person name="Watahiki A."/>
            <person name="Okamura-Oho Y."/>
            <person name="Suzuki H."/>
            <person name="Kawai J."/>
            <person name="Hayashizaki Y."/>
        </authorList>
    </citation>
    <scope>NUCLEOTIDE SEQUENCE [LARGE SCALE MRNA]</scope>
    <source>
        <strain>C57BL/6J</strain>
        <tissue>Cerebellum</tissue>
        <tissue>Embryonic head</tissue>
        <tissue>Embryonic heart</tissue>
        <tissue>Lung</tissue>
    </source>
</reference>
<reference key="2">
    <citation type="journal article" date="2004" name="Genome Res.">
        <title>The status, quality, and expansion of the NIH full-length cDNA project: the Mammalian Gene Collection (MGC).</title>
        <authorList>
            <consortium name="The MGC Project Team"/>
        </authorList>
    </citation>
    <scope>NUCLEOTIDE SEQUENCE [LARGE SCALE MRNA]</scope>
    <source>
        <strain>Czech II</strain>
        <tissue>Mammary gland</tissue>
    </source>
</reference>
<reference key="3">
    <citation type="journal article" date="2003" name="EMBO Rep.">
        <title>Identification of a family of endocytic proteins that define a new alpha-adaptin ear-binding motif.</title>
        <authorList>
            <person name="Ritter B."/>
            <person name="Philie J."/>
            <person name="Girard M."/>
            <person name="Tung E.C."/>
            <person name="Blondeau F."/>
            <person name="McPherson P.S."/>
        </authorList>
    </citation>
    <scope>IDENTIFICATION</scope>
    <scope>INTERACTION WITH AP1G1 AND AP2A1</scope>
    <scope>TISSUE SPECIFICITY</scope>
    <scope>SUBCELLULAR LOCATION</scope>
    <scope>FUNCTION</scope>
</reference>
<reference key="4">
    <citation type="journal article" date="2004" name="EMBO J.">
        <title>Two WXXF-based motifs in NECAPs define the specificity of accessory protein binding to AP-1 and AP-2.</title>
        <authorList>
            <person name="Ritter B."/>
            <person name="Denisov A.Y."/>
            <person name="Philie J."/>
            <person name="Deprez C."/>
            <person name="Tung E.C."/>
            <person name="Gehring K."/>
            <person name="McPherson P.S."/>
        </authorList>
    </citation>
    <scope>MUTAGENESIS OF TRP-272; VAL-273; GLN-274 AND PHE-275</scope>
    <scope>INTERACTION WITH AP2A1; AP2A2 AND AP1G1</scope>
</reference>
<reference key="5">
    <citation type="journal article" date="2004" name="J. Biol. Chem.">
        <title>Definition of the consensus motif recognized by gamma-adaptin ear domains.</title>
        <authorList>
            <person name="Mattera R."/>
            <person name="Ritter B."/>
            <person name="Sidhu S.S."/>
            <person name="McPherson P.S."/>
            <person name="Bonifacino J.S."/>
        </authorList>
    </citation>
    <scope>INTERACTION WITH GGA1; GGA2; GGA3 AND AP1G1</scope>
</reference>
<reference key="6">
    <citation type="journal article" date="2010" name="Cell">
        <title>A tissue-specific atlas of mouse protein phosphorylation and expression.</title>
        <authorList>
            <person name="Huttlin E.L."/>
            <person name="Jedrychowski M.P."/>
            <person name="Elias J.E."/>
            <person name="Goswami T."/>
            <person name="Rad R."/>
            <person name="Beausoleil S.A."/>
            <person name="Villen J."/>
            <person name="Haas W."/>
            <person name="Sowa M.E."/>
            <person name="Gygi S.P."/>
        </authorList>
    </citation>
    <scope>IDENTIFICATION BY MASS SPECTROMETRY [LARGE SCALE ANALYSIS]</scope>
    <source>
        <tissue>Brain</tissue>
        <tissue>Heart</tissue>
        <tissue>Kidney</tissue>
        <tissue>Liver</tissue>
        <tissue>Lung</tissue>
        <tissue>Pancreas</tissue>
        <tissue>Testis</tissue>
    </source>
</reference>
<reference key="7">
    <citation type="journal article" date="2014" name="J. Med. Genet.">
        <title>NECAP1 loss of function leads to a severe infantile epileptic encephalopathy.</title>
        <authorList>
            <person name="Alazami A.M."/>
            <person name="Hijazi H."/>
            <person name="Kentab A.Y."/>
            <person name="Alkuraya F.S."/>
        </authorList>
    </citation>
    <scope>DEVELOPMENTAL STAGE</scope>
</reference>
<reference key="8">
    <citation type="submission" date="2005-07" db="PDB data bank">
        <title>Solution structure of NECAP1 protein.</title>
        <authorList>
            <person name="Denisov A.Y."/>
            <person name="Ritter B."/>
            <person name="McPherson P.S."/>
            <person name="Gehring K."/>
        </authorList>
    </citation>
    <scope>STRUCTURE BY NMR OF 1-133</scope>
</reference>
<sequence>MAAELEYESVLCVKPDVSVYRIPPRASNRGYRASDWKLDQPDWTGRLRITSKGKIAYIKLEDKVSGELFAQAPVEQYPGIAVETVTDSSRYFVIRIQDGTGRSAFIGIGFTDRGDAFDFNVSLQDHFKWVKQETEISKESQEMDNRPKLDLGFKEGQTIKLSIGNITAKKGGASKPRASGTGGLSLLPPPPGGKVTIPPPSSSVAISNHVTPPPIPKSNHGGNDSDILLDLDSPAPVSTSAPAPVSTSNDLWGDFSTASSSVPNQAPQPSNWVQF</sequence>
<organism>
    <name type="scientific">Mus musculus</name>
    <name type="common">Mouse</name>
    <dbReference type="NCBI Taxonomy" id="10090"/>
    <lineage>
        <taxon>Eukaryota</taxon>
        <taxon>Metazoa</taxon>
        <taxon>Chordata</taxon>
        <taxon>Craniata</taxon>
        <taxon>Vertebrata</taxon>
        <taxon>Euteleostomi</taxon>
        <taxon>Mammalia</taxon>
        <taxon>Eutheria</taxon>
        <taxon>Euarchontoglires</taxon>
        <taxon>Glires</taxon>
        <taxon>Rodentia</taxon>
        <taxon>Myomorpha</taxon>
        <taxon>Muroidea</taxon>
        <taxon>Muridae</taxon>
        <taxon>Murinae</taxon>
        <taxon>Mus</taxon>
        <taxon>Mus</taxon>
    </lineage>
</organism>
<feature type="chain" id="PRO_0000213068" description="Adaptin ear-binding coat-associated protein 1">
    <location>
        <begin position="1"/>
        <end position="275"/>
    </location>
</feature>
<feature type="region of interest" description="Disordered" evidence="3">
    <location>
        <begin position="168"/>
        <end position="275"/>
    </location>
</feature>
<feature type="short sequence motif" description="WXXF motif 1">
    <location>
        <begin position="252"/>
        <end position="255"/>
    </location>
</feature>
<feature type="short sequence motif" description="WXXF motif 2">
    <location>
        <begin position="272"/>
        <end position="275"/>
    </location>
</feature>
<feature type="compositionally biased region" description="Pro residues" evidence="3">
    <location>
        <begin position="187"/>
        <end position="201"/>
    </location>
</feature>
<feature type="compositionally biased region" description="Low complexity" evidence="3">
    <location>
        <begin position="233"/>
        <end position="248"/>
    </location>
</feature>
<feature type="compositionally biased region" description="Polar residues" evidence="3">
    <location>
        <begin position="256"/>
        <end position="275"/>
    </location>
</feature>
<feature type="modified residue" description="Phosphothreonine" evidence="2">
    <location>
        <position position="211"/>
    </location>
</feature>
<feature type="mutagenesis site" description="Loss of binding to AP-2 and can bind to AP-1; when associated with G-273.">
    <original>S</original>
    <variation>D</variation>
    <location>
        <position position="270"/>
    </location>
</feature>
<feature type="mutagenesis site" description="Loss of binding to AP-2." evidence="6">
    <original>W</original>
    <variation>A</variation>
    <variation>F</variation>
    <variation>Y</variation>
    <location>
        <position position="272"/>
    </location>
</feature>
<feature type="mutagenesis site" description="No effect on binding to AP-2." evidence="6">
    <original>V</original>
    <variation>A</variation>
    <variation>D</variation>
    <variation>E</variation>
    <variation>I</variation>
    <location>
        <position position="273"/>
    </location>
</feature>
<feature type="mutagenesis site" description="Loss of binding to AP-2 and can bind to AP-1; when associated with D-270." evidence="6">
    <original>V</original>
    <variation>G</variation>
    <location>
        <position position="273"/>
    </location>
</feature>
<feature type="mutagenesis site" description="Loss of binding to AP-2." evidence="6">
    <original>V</original>
    <variation>L</variation>
    <variation>N</variation>
    <variation>P</variation>
    <variation>S</variation>
    <location>
        <position position="273"/>
    </location>
</feature>
<feature type="mutagenesis site" description="No effect on binding to AP-2." evidence="6">
    <original>Q</original>
    <variation>A</variation>
    <variation>M</variation>
    <variation>N</variation>
    <variation>S</variation>
    <variation>T</variation>
    <location>
        <position position="274"/>
    </location>
</feature>
<feature type="mutagenesis site" description="Loss of binding to AP-2." evidence="6">
    <original>F</original>
    <variation>A</variation>
    <variation>F</variation>
    <variation>Y</variation>
    <location>
        <position position="275"/>
    </location>
</feature>
<feature type="mutagenesis site" description="No effect on binding to AP-2." evidence="6">
    <original>F</original>
    <variation>W</variation>
    <location>
        <position position="275"/>
    </location>
</feature>
<feature type="strand" evidence="9">
    <location>
        <begin position="15"/>
        <end position="21"/>
    </location>
</feature>
<feature type="strand" evidence="9">
    <location>
        <begin position="27"/>
        <end position="30"/>
    </location>
</feature>
<feature type="helix" evidence="9">
    <location>
        <begin position="33"/>
        <end position="36"/>
    </location>
</feature>
<feature type="strand" evidence="9">
    <location>
        <begin position="39"/>
        <end position="41"/>
    </location>
</feature>
<feature type="strand" evidence="9">
    <location>
        <begin position="43"/>
        <end position="50"/>
    </location>
</feature>
<feature type="strand" evidence="9">
    <location>
        <begin position="53"/>
        <end position="61"/>
    </location>
</feature>
<feature type="strand" evidence="9">
    <location>
        <begin position="70"/>
        <end position="74"/>
    </location>
</feature>
<feature type="strand" evidence="9">
    <location>
        <begin position="82"/>
        <end position="84"/>
    </location>
</feature>
<feature type="strand" evidence="9">
    <location>
        <begin position="92"/>
        <end position="98"/>
    </location>
</feature>
<feature type="turn" evidence="9">
    <location>
        <begin position="99"/>
        <end position="101"/>
    </location>
</feature>
<feature type="strand" evidence="9">
    <location>
        <begin position="102"/>
        <end position="109"/>
    </location>
</feature>
<feature type="helix" evidence="9">
    <location>
        <begin position="113"/>
        <end position="127"/>
    </location>
</feature>
<accession>Q9CR95</accession>
<accession>Q3TH13</accession>
<accession>Q78JW3</accession>
<accession>Q8C4P1</accession>
<name>NECP1_MOUSE</name>
<evidence type="ECO:0000250" key="1"/>
<evidence type="ECO:0000250" key="2">
    <source>
        <dbReference type="UniProtKB" id="Q8NC96"/>
    </source>
</evidence>
<evidence type="ECO:0000256" key="3">
    <source>
        <dbReference type="SAM" id="MobiDB-lite"/>
    </source>
</evidence>
<evidence type="ECO:0000269" key="4">
    <source>
    </source>
</evidence>
<evidence type="ECO:0000269" key="5">
    <source>
    </source>
</evidence>
<evidence type="ECO:0000269" key="6">
    <source>
    </source>
</evidence>
<evidence type="ECO:0000269" key="7">
    <source>
    </source>
</evidence>
<evidence type="ECO:0000305" key="8"/>
<evidence type="ECO:0007829" key="9">
    <source>
        <dbReference type="PDB" id="1TQZ"/>
    </source>
</evidence>
<proteinExistence type="evidence at protein level"/>
<dbReference type="EMBL" id="AK004805">
    <property type="protein sequence ID" value="BAB23577.2"/>
    <property type="molecule type" value="mRNA"/>
</dbReference>
<dbReference type="EMBL" id="AK005263">
    <property type="protein sequence ID" value="BAB23915.2"/>
    <property type="molecule type" value="mRNA"/>
</dbReference>
<dbReference type="EMBL" id="AK081598">
    <property type="protein sequence ID" value="BAC38266.1"/>
    <property type="molecule type" value="mRNA"/>
</dbReference>
<dbReference type="EMBL" id="AK168500">
    <property type="protein sequence ID" value="BAE40385.1"/>
    <property type="molecule type" value="mRNA"/>
</dbReference>
<dbReference type="EMBL" id="BC011466">
    <property type="protein sequence ID" value="AAH11466.2"/>
    <property type="molecule type" value="mRNA"/>
</dbReference>
<dbReference type="EMBL" id="BK000656">
    <property type="protein sequence ID" value="DAA01433.1"/>
    <property type="molecule type" value="mRNA"/>
</dbReference>
<dbReference type="CCDS" id="CCDS20505.1"/>
<dbReference type="RefSeq" id="NP_080543.2">
    <property type="nucleotide sequence ID" value="NM_026267.2"/>
</dbReference>
<dbReference type="PDB" id="1TQZ">
    <property type="method" value="NMR"/>
    <property type="chains" value="A=1-133"/>
</dbReference>
<dbReference type="PDBsum" id="1TQZ"/>
<dbReference type="SMR" id="Q9CR95"/>
<dbReference type="BioGRID" id="212303">
    <property type="interactions" value="11"/>
</dbReference>
<dbReference type="DIP" id="DIP-44062N"/>
<dbReference type="FunCoup" id="Q9CR95">
    <property type="interactions" value="1913"/>
</dbReference>
<dbReference type="IntAct" id="Q9CR95">
    <property type="interactions" value="15"/>
</dbReference>
<dbReference type="MINT" id="Q9CR95"/>
<dbReference type="STRING" id="10090.ENSMUSP00000032477"/>
<dbReference type="GlyGen" id="Q9CR95">
    <property type="glycosylation" value="6 sites, 2 N-linked glycans (2 sites), 1 O-linked glycan (4 sites)"/>
</dbReference>
<dbReference type="iPTMnet" id="Q9CR95"/>
<dbReference type="PhosphoSitePlus" id="Q9CR95"/>
<dbReference type="SwissPalm" id="Q9CR95"/>
<dbReference type="jPOST" id="Q9CR95"/>
<dbReference type="PaxDb" id="10090-ENSMUSP00000032477"/>
<dbReference type="ProteomicsDB" id="286171"/>
<dbReference type="Pumba" id="Q9CR95"/>
<dbReference type="Antibodypedia" id="23021">
    <property type="antibodies" value="63 antibodies from 19 providers"/>
</dbReference>
<dbReference type="DNASU" id="67602"/>
<dbReference type="Ensembl" id="ENSMUST00000032477.6">
    <property type="protein sequence ID" value="ENSMUSP00000032477.5"/>
    <property type="gene ID" value="ENSMUSG00000030327.9"/>
</dbReference>
<dbReference type="GeneID" id="67602"/>
<dbReference type="KEGG" id="mmu:67602"/>
<dbReference type="UCSC" id="uc009dpt.1">
    <property type="organism name" value="mouse"/>
</dbReference>
<dbReference type="AGR" id="MGI:1914852"/>
<dbReference type="CTD" id="25977"/>
<dbReference type="MGI" id="MGI:1914852">
    <property type="gene designation" value="Necap1"/>
</dbReference>
<dbReference type="VEuPathDB" id="HostDB:ENSMUSG00000030327"/>
<dbReference type="eggNOG" id="KOG2500">
    <property type="taxonomic scope" value="Eukaryota"/>
</dbReference>
<dbReference type="GeneTree" id="ENSGT00390000009359"/>
<dbReference type="HOGENOM" id="CLU_069884_1_1_1"/>
<dbReference type="InParanoid" id="Q9CR95"/>
<dbReference type="OMA" id="LTTNRGH"/>
<dbReference type="OrthoDB" id="10265489at2759"/>
<dbReference type="PhylomeDB" id="Q9CR95"/>
<dbReference type="TreeFam" id="TF314482"/>
<dbReference type="Reactome" id="R-MMU-432722">
    <property type="pathway name" value="Golgi Associated Vesicle Biogenesis"/>
</dbReference>
<dbReference type="Reactome" id="R-MMU-8856825">
    <property type="pathway name" value="Cargo recognition for clathrin-mediated endocytosis"/>
</dbReference>
<dbReference type="Reactome" id="R-MMU-8856828">
    <property type="pathway name" value="Clathrin-mediated endocytosis"/>
</dbReference>
<dbReference type="BioGRID-ORCS" id="67602">
    <property type="hits" value="4 hits in 80 CRISPR screens"/>
</dbReference>
<dbReference type="CD-CODE" id="CE726F99">
    <property type="entry name" value="Postsynaptic density"/>
</dbReference>
<dbReference type="EvolutionaryTrace" id="Q9CR95"/>
<dbReference type="PRO" id="PR:Q9CR95"/>
<dbReference type="Proteomes" id="UP000000589">
    <property type="component" value="Chromosome 6"/>
</dbReference>
<dbReference type="RNAct" id="Q9CR95">
    <property type="molecule type" value="protein"/>
</dbReference>
<dbReference type="Bgee" id="ENSMUSG00000030327">
    <property type="expression patterns" value="Expressed in medulla oblongata and 254 other cell types or tissues"/>
</dbReference>
<dbReference type="ExpressionAtlas" id="Q9CR95">
    <property type="expression patterns" value="baseline and differential"/>
</dbReference>
<dbReference type="GO" id="GO:0030125">
    <property type="term" value="C:clathrin vesicle coat"/>
    <property type="evidence" value="ECO:0000314"/>
    <property type="project" value="UniProtKB"/>
</dbReference>
<dbReference type="GO" id="GO:0005905">
    <property type="term" value="C:clathrin-coated pit"/>
    <property type="evidence" value="ECO:0000314"/>
    <property type="project" value="UniProtKB"/>
</dbReference>
<dbReference type="GO" id="GO:0005886">
    <property type="term" value="C:plasma membrane"/>
    <property type="evidence" value="ECO:0007669"/>
    <property type="project" value="UniProtKB-SubCell"/>
</dbReference>
<dbReference type="GO" id="GO:0098793">
    <property type="term" value="C:presynapse"/>
    <property type="evidence" value="ECO:0007669"/>
    <property type="project" value="Ensembl"/>
</dbReference>
<dbReference type="GO" id="GO:0006897">
    <property type="term" value="P:endocytosis"/>
    <property type="evidence" value="ECO:0000315"/>
    <property type="project" value="UniProtKB"/>
</dbReference>
<dbReference type="GO" id="GO:0140238">
    <property type="term" value="P:presynaptic endocytosis"/>
    <property type="evidence" value="ECO:0007669"/>
    <property type="project" value="Ensembl"/>
</dbReference>
<dbReference type="GO" id="GO:0015031">
    <property type="term" value="P:protein transport"/>
    <property type="evidence" value="ECO:0007669"/>
    <property type="project" value="UniProtKB-KW"/>
</dbReference>
<dbReference type="CDD" id="cd13228">
    <property type="entry name" value="PHear_NECAP"/>
    <property type="match status" value="1"/>
</dbReference>
<dbReference type="FunFam" id="2.30.29.30:FF:000064">
    <property type="entry name" value="Adaptin ear-binding coat-associated protein 1"/>
    <property type="match status" value="1"/>
</dbReference>
<dbReference type="Gene3D" id="2.30.29.30">
    <property type="entry name" value="Pleckstrin-homology domain (PH domain)/Phosphotyrosine-binding domain (PTB)"/>
    <property type="match status" value="1"/>
</dbReference>
<dbReference type="InterPro" id="IPR012466">
    <property type="entry name" value="NECAP_PHear"/>
</dbReference>
<dbReference type="InterPro" id="IPR011993">
    <property type="entry name" value="PH-like_dom_sf"/>
</dbReference>
<dbReference type="PANTHER" id="PTHR12847:SF15">
    <property type="entry name" value="ADAPTIN EAR-BINDING COAT-ASSOCIATED PROTEIN 1"/>
    <property type="match status" value="1"/>
</dbReference>
<dbReference type="PANTHER" id="PTHR12847">
    <property type="entry name" value="ATP-BINDING CASSETTE ABC TRANSPORTER-RELATED"/>
    <property type="match status" value="1"/>
</dbReference>
<dbReference type="Pfam" id="PF07933">
    <property type="entry name" value="DUF1681"/>
    <property type="match status" value="1"/>
</dbReference>
<dbReference type="SUPFAM" id="SSF50729">
    <property type="entry name" value="PH domain-like"/>
    <property type="match status" value="1"/>
</dbReference>
<keyword id="KW-0002">3D-structure</keyword>
<keyword id="KW-1003">Cell membrane</keyword>
<keyword id="KW-0968">Cytoplasmic vesicle</keyword>
<keyword id="KW-0254">Endocytosis</keyword>
<keyword id="KW-0472">Membrane</keyword>
<keyword id="KW-0597">Phosphoprotein</keyword>
<keyword id="KW-0653">Protein transport</keyword>
<keyword id="KW-1185">Reference proteome</keyword>
<keyword id="KW-0677">Repeat</keyword>
<keyword id="KW-0813">Transport</keyword>